<comment type="function">
    <text evidence="2">Calcium sensor of the mitochondrial calcium uniporter (MCU) channel, which senses calcium level via its EF-hand domains. MICU1 and MICU2 (or MICU3) form a disulfide-linked heterodimer that stimulates and inhibits MCU activity, depending on the concentration of calcium. At low calcium levels, MICU1 occludes the pore of the MCU channel, preventing mitochondrial calcium uptake. At higher calcium levels, calcium-binding to MICU1 and MICU2 (or MICU3) induces a conformational change that weakens MCU-MICU1 interactions and moves the MICU1-MICU2 heterodimer away from the pore, allowing calcium permeation through the MCU channel. Also required to protect against manganese toxicity by preventing manganese uptake by MCU: mechanistically, manganese-binding to its EF-hand domains does not induce any conformational change, maintaining MCU pore occlusion. Acts as a regulator of mitochondrial cristae structure independently of its ability to regulate the mitochondrial calcium uniporter channel. Regulates glucose-dependent insulin secretion in pancreatic beta-cells by regulating mitochondrial calcium uptake. Induces T-helper 1-mediated autoreactivity, which is accompanied by the release of IFNG.</text>
</comment>
<comment type="subunit">
    <text evidence="2">Heterodimer; disulfide-linked; heterodimerizes with MICU2 or MICU3. Homodimer; disulfide-linked. Component of the uniplex complex, composed of MCU, EMRE/SMDT1, MICU1 and MICU2 (or MICU3) in a 4:4:1:1 stoichiometry. The composition of calcium sensors within the uniplex complex can differ depending on tissues: a MICU1 homodimer can be present instead of the MICU1-MICU2 heterodimer in skeletal-muscle and kidney. MICU1 is recruited to the uniplex complex by EMRE/SMDT1, and it associates with MCU at low calcium levels, occluding the pore of the MCU channel. Associates with the MICOS complex. Interacts with SLC25A23. Interacts with CHCHD4/MIA40; which introduces the interchain disulfide bond with MICU2. Interacts (when methylated) with UCP2; leading to decrease the calcium sensitivity of MICU1.</text>
</comment>
<comment type="subcellular location">
    <subcellularLocation>
        <location evidence="2">Mitochondrion intermembrane space</location>
    </subcellularLocation>
    <subcellularLocation>
        <location evidence="2">Mitochondrion inner membrane</location>
    </subcellularLocation>
    <text evidence="2">Recruited to the mitochondrial inner membrane by EMRE/SMDT1. Also localizes to mitochondrial cristae junctions.</text>
</comment>
<comment type="domain">
    <text evidence="2">The EF-hand domains have high affinity for calcium and act as sensors of calcium levels.</text>
</comment>
<comment type="domain">
    <text evidence="2">The polybasic region mediates interaction with EMRE/SMDT1 and association with the uniplex complex.</text>
</comment>
<comment type="domain">
    <text evidence="2">Lysine and arginine residues in the K/R-ring mediate electrostatic interactions with MCU and play a key role in MCU inhibition in absence of calcium.</text>
</comment>
<comment type="domain">
    <text evidence="2">The C-helix plays a key role in mitochondrial calcium uptake, probably by mediating interaction with MICU2.</text>
</comment>
<comment type="PTM">
    <text evidence="1">Phosphorylation at Ser-124 by AKT1 impairs its maturation and stability.</text>
</comment>
<comment type="PTM">
    <text evidence="2">Asymmetric dimethylation at Arg-457 by PRMT1 decreases the calcium sensitivity of MICU1 by promoting interaction with UCP2.</text>
</comment>
<comment type="PTM">
    <text evidence="2">Degraded by YME1L1 when not complexed as homodimer or heterodimer. Not degraded when complexed as homodimer or heterodimer; the presence of the interchain disulfide bond protecting MICU1 from degradation by YME1L1.</text>
</comment>
<comment type="similarity">
    <text evidence="6">Belongs to the MICU1 family. MICU1 subfamily.</text>
</comment>
<dbReference type="EMBL" id="BC122590">
    <property type="protein sequence ID" value="AAI22591.1"/>
    <property type="molecule type" value="mRNA"/>
</dbReference>
<dbReference type="RefSeq" id="NP_001068806.1">
    <property type="nucleotide sequence ID" value="NM_001075338.1"/>
</dbReference>
<dbReference type="SMR" id="Q0IIL1"/>
<dbReference type="FunCoup" id="Q0IIL1">
    <property type="interactions" value="1839"/>
</dbReference>
<dbReference type="STRING" id="9913.ENSBTAP00000007636"/>
<dbReference type="PaxDb" id="9913-ENSBTAP00000007636"/>
<dbReference type="Ensembl" id="ENSBTAT00000007636.7">
    <property type="protein sequence ID" value="ENSBTAP00000007636.5"/>
    <property type="gene ID" value="ENSBTAG00000005807.7"/>
</dbReference>
<dbReference type="GeneID" id="507899"/>
<dbReference type="KEGG" id="bta:507899"/>
<dbReference type="CTD" id="10367"/>
<dbReference type="VEuPathDB" id="HostDB:ENSBTAG00000005807"/>
<dbReference type="VGNC" id="VGNC:31461">
    <property type="gene designation" value="MICU1"/>
</dbReference>
<dbReference type="eggNOG" id="KOG2643">
    <property type="taxonomic scope" value="Eukaryota"/>
</dbReference>
<dbReference type="GeneTree" id="ENSGT00950000183079"/>
<dbReference type="HOGENOM" id="CLU_027103_3_1_1"/>
<dbReference type="InParanoid" id="Q0IIL1"/>
<dbReference type="OMA" id="YPEYMFF"/>
<dbReference type="OrthoDB" id="10056860at2759"/>
<dbReference type="TreeFam" id="TF313815"/>
<dbReference type="Reactome" id="R-BTA-8949215">
    <property type="pathway name" value="Mitochondrial calcium ion transport"/>
</dbReference>
<dbReference type="Reactome" id="R-BTA-8949664">
    <property type="pathway name" value="Processing of SMDT1"/>
</dbReference>
<dbReference type="Proteomes" id="UP000009136">
    <property type="component" value="Chromosome 28"/>
</dbReference>
<dbReference type="Bgee" id="ENSBTAG00000005807">
    <property type="expression patterns" value="Expressed in semitendinosus and 103 other cell types or tissues"/>
</dbReference>
<dbReference type="GO" id="GO:0034704">
    <property type="term" value="C:calcium channel complex"/>
    <property type="evidence" value="ECO:0000250"/>
    <property type="project" value="UniProtKB"/>
</dbReference>
<dbReference type="GO" id="GO:0005743">
    <property type="term" value="C:mitochondrial inner membrane"/>
    <property type="evidence" value="ECO:0000250"/>
    <property type="project" value="UniProtKB"/>
</dbReference>
<dbReference type="GO" id="GO:0005758">
    <property type="term" value="C:mitochondrial intermembrane space"/>
    <property type="evidence" value="ECO:0000250"/>
    <property type="project" value="UniProtKB"/>
</dbReference>
<dbReference type="GO" id="GO:0031966">
    <property type="term" value="C:mitochondrial membrane"/>
    <property type="evidence" value="ECO:0000250"/>
    <property type="project" value="UniProtKB"/>
</dbReference>
<dbReference type="GO" id="GO:1990246">
    <property type="term" value="C:uniplex complex"/>
    <property type="evidence" value="ECO:0000250"/>
    <property type="project" value="UniProtKB"/>
</dbReference>
<dbReference type="GO" id="GO:0005509">
    <property type="term" value="F:calcium ion binding"/>
    <property type="evidence" value="ECO:0000250"/>
    <property type="project" value="UniProtKB"/>
</dbReference>
<dbReference type="GO" id="GO:0061891">
    <property type="term" value="F:calcium ion sensor activity"/>
    <property type="evidence" value="ECO:0000250"/>
    <property type="project" value="UniProtKB"/>
</dbReference>
<dbReference type="GO" id="GO:0036444">
    <property type="term" value="P:calcium import into the mitochondrion"/>
    <property type="evidence" value="ECO:0000250"/>
    <property type="project" value="UniProtKB"/>
</dbReference>
<dbReference type="GO" id="GO:0070509">
    <property type="term" value="P:calcium ion import"/>
    <property type="evidence" value="ECO:0000250"/>
    <property type="project" value="UniProtKB"/>
</dbReference>
<dbReference type="GO" id="GO:0051560">
    <property type="term" value="P:mitochondrial calcium ion homeostasis"/>
    <property type="evidence" value="ECO:0000250"/>
    <property type="project" value="UniProtKB"/>
</dbReference>
<dbReference type="GO" id="GO:0006851">
    <property type="term" value="P:mitochondrial calcium ion transmembrane transport"/>
    <property type="evidence" value="ECO:0000250"/>
    <property type="project" value="UniProtKB"/>
</dbReference>
<dbReference type="GO" id="GO:1903852">
    <property type="term" value="P:positive regulation of cristae formation"/>
    <property type="evidence" value="ECO:0000250"/>
    <property type="project" value="UniProtKB"/>
</dbReference>
<dbReference type="GO" id="GO:0051561">
    <property type="term" value="P:positive regulation of mitochondrial calcium ion concentration"/>
    <property type="evidence" value="ECO:0000250"/>
    <property type="project" value="UniProtKB"/>
</dbReference>
<dbReference type="GO" id="GO:1900069">
    <property type="term" value="P:regulation of cellular hyperosmotic salinity response"/>
    <property type="evidence" value="ECO:0000250"/>
    <property type="project" value="UniProtKB"/>
</dbReference>
<dbReference type="CDD" id="cd16173">
    <property type="entry name" value="EFh_MICU1"/>
    <property type="match status" value="1"/>
</dbReference>
<dbReference type="FunFam" id="1.10.238.10:FF:000088">
    <property type="entry name" value="Calcium uptake protein 1, mitochondrial"/>
    <property type="match status" value="1"/>
</dbReference>
<dbReference type="FunFam" id="1.10.238.10:FF:000159">
    <property type="entry name" value="Calcium uptake protein 1, mitochondrial"/>
    <property type="match status" value="1"/>
</dbReference>
<dbReference type="Gene3D" id="1.10.238.10">
    <property type="entry name" value="EF-hand"/>
    <property type="match status" value="2"/>
</dbReference>
<dbReference type="InterPro" id="IPR011992">
    <property type="entry name" value="EF-hand-dom_pair"/>
</dbReference>
<dbReference type="InterPro" id="IPR018247">
    <property type="entry name" value="EF_Hand_1_Ca_BS"/>
</dbReference>
<dbReference type="InterPro" id="IPR002048">
    <property type="entry name" value="EF_hand_dom"/>
</dbReference>
<dbReference type="InterPro" id="IPR039800">
    <property type="entry name" value="MICU1/2/3"/>
</dbReference>
<dbReference type="PANTHER" id="PTHR12294:SF1">
    <property type="entry name" value="CALCIUM UPTAKE PROTEIN 1, MITOCHONDRIAL"/>
    <property type="match status" value="1"/>
</dbReference>
<dbReference type="PANTHER" id="PTHR12294">
    <property type="entry name" value="EF HAND DOMAIN FAMILY A1,A2-RELATED"/>
    <property type="match status" value="1"/>
</dbReference>
<dbReference type="Pfam" id="PF13202">
    <property type="entry name" value="EF-hand_5"/>
    <property type="match status" value="1"/>
</dbReference>
<dbReference type="Pfam" id="PF13833">
    <property type="entry name" value="EF-hand_8"/>
    <property type="match status" value="1"/>
</dbReference>
<dbReference type="SMART" id="SM00054">
    <property type="entry name" value="EFh"/>
    <property type="match status" value="2"/>
</dbReference>
<dbReference type="SUPFAM" id="SSF47473">
    <property type="entry name" value="EF-hand"/>
    <property type="match status" value="2"/>
</dbReference>
<dbReference type="PROSITE" id="PS00018">
    <property type="entry name" value="EF_HAND_1"/>
    <property type="match status" value="2"/>
</dbReference>
<dbReference type="PROSITE" id="PS50222">
    <property type="entry name" value="EF_HAND_2"/>
    <property type="match status" value="2"/>
</dbReference>
<protein>
    <recommendedName>
        <fullName>Calcium uptake protein 1, mitochondrial</fullName>
    </recommendedName>
    <alternativeName>
        <fullName>Calcium-binding atopy-related autoantigen 1 homolog</fullName>
    </alternativeName>
</protein>
<proteinExistence type="evidence at transcript level"/>
<keyword id="KW-0106">Calcium</keyword>
<keyword id="KW-0109">Calcium transport</keyword>
<keyword id="KW-1015">Disulfide bond</keyword>
<keyword id="KW-0406">Ion transport</keyword>
<keyword id="KW-0472">Membrane</keyword>
<keyword id="KW-0479">Metal-binding</keyword>
<keyword id="KW-0488">Methylation</keyword>
<keyword id="KW-0496">Mitochondrion</keyword>
<keyword id="KW-0999">Mitochondrion inner membrane</keyword>
<keyword id="KW-0597">Phosphoprotein</keyword>
<keyword id="KW-1185">Reference proteome</keyword>
<keyword id="KW-0677">Repeat</keyword>
<keyword id="KW-0809">Transit peptide</keyword>
<keyword id="KW-0813">Transport</keyword>
<feature type="transit peptide" description="Mitochondrion" evidence="2 3">
    <location>
        <begin position="1"/>
        <end position="33"/>
    </location>
</feature>
<feature type="chain" id="PRO_0000322989" description="Calcium uptake protein 1, mitochondrial">
    <location>
        <begin position="34"/>
        <end position="478"/>
    </location>
</feature>
<feature type="domain" description="EF-hand 1" evidence="4">
    <location>
        <begin position="220"/>
        <end position="255"/>
    </location>
</feature>
<feature type="domain" description="EF-hand 2" evidence="4">
    <location>
        <begin position="410"/>
        <end position="445"/>
    </location>
</feature>
<feature type="region of interest" description="Disordered" evidence="5">
    <location>
        <begin position="61"/>
        <end position="85"/>
    </location>
</feature>
<feature type="region of interest" description="Polybasic region" evidence="2">
    <location>
        <begin position="101"/>
        <end position="112"/>
    </location>
</feature>
<feature type="region of interest" description="K/R-ring" evidence="2">
    <location>
        <begin position="128"/>
        <end position="131"/>
    </location>
</feature>
<feature type="region of interest" description="K/R-ring" evidence="2">
    <location>
        <begin position="261"/>
        <end position="265"/>
    </location>
</feature>
<feature type="region of interest" description="C-helix region" evidence="2">
    <location>
        <begin position="457"/>
        <end position="467"/>
    </location>
</feature>
<feature type="compositionally biased region" description="Basic and acidic residues" evidence="5">
    <location>
        <begin position="69"/>
        <end position="85"/>
    </location>
</feature>
<feature type="binding site" evidence="4">
    <location>
        <position position="233"/>
    </location>
    <ligand>
        <name>Ca(2+)</name>
        <dbReference type="ChEBI" id="CHEBI:29108"/>
        <label>1</label>
    </ligand>
</feature>
<feature type="binding site" evidence="4">
    <location>
        <position position="235"/>
    </location>
    <ligand>
        <name>Ca(2+)</name>
        <dbReference type="ChEBI" id="CHEBI:29108"/>
        <label>1</label>
    </ligand>
</feature>
<feature type="binding site" evidence="4">
    <location>
        <position position="237"/>
    </location>
    <ligand>
        <name>Ca(2+)</name>
        <dbReference type="ChEBI" id="CHEBI:29108"/>
        <label>1</label>
    </ligand>
</feature>
<feature type="binding site" evidence="4">
    <location>
        <position position="239"/>
    </location>
    <ligand>
        <name>Ca(2+)</name>
        <dbReference type="ChEBI" id="CHEBI:29108"/>
        <label>1</label>
    </ligand>
</feature>
<feature type="binding site" evidence="4">
    <location>
        <position position="244"/>
    </location>
    <ligand>
        <name>Ca(2+)</name>
        <dbReference type="ChEBI" id="CHEBI:29108"/>
        <label>1</label>
    </ligand>
</feature>
<feature type="binding site" evidence="4">
    <location>
        <position position="423"/>
    </location>
    <ligand>
        <name>Ca(2+)</name>
        <dbReference type="ChEBI" id="CHEBI:29108"/>
        <label>2</label>
    </ligand>
</feature>
<feature type="binding site" evidence="4">
    <location>
        <position position="425"/>
    </location>
    <ligand>
        <name>Ca(2+)</name>
        <dbReference type="ChEBI" id="CHEBI:29108"/>
        <label>2</label>
    </ligand>
</feature>
<feature type="binding site" evidence="4">
    <location>
        <position position="427"/>
    </location>
    <ligand>
        <name>Ca(2+)</name>
        <dbReference type="ChEBI" id="CHEBI:29108"/>
        <label>2</label>
    </ligand>
</feature>
<feature type="binding site" evidence="4">
    <location>
        <position position="429"/>
    </location>
    <ligand>
        <name>Ca(2+)</name>
        <dbReference type="ChEBI" id="CHEBI:29108"/>
        <label>2</label>
    </ligand>
</feature>
<feature type="binding site" evidence="4">
    <location>
        <position position="434"/>
    </location>
    <ligand>
        <name>Ca(2+)</name>
        <dbReference type="ChEBI" id="CHEBI:29108"/>
        <label>2</label>
    </ligand>
</feature>
<feature type="modified residue" description="Phosphoserine" evidence="1">
    <location>
        <position position="124"/>
    </location>
</feature>
<feature type="modified residue" description="Asymmetric dimethylarginine" evidence="2">
    <location>
        <position position="457"/>
    </location>
</feature>
<feature type="disulfide bond" description="Interchain (with C-413 in MICU2)" evidence="2">
    <location>
        <position position="465"/>
    </location>
</feature>
<name>MICU1_BOVIN</name>
<reference key="1">
    <citation type="submission" date="2006-08" db="EMBL/GenBank/DDBJ databases">
        <authorList>
            <consortium name="NIH - Mammalian Gene Collection (MGC) project"/>
        </authorList>
    </citation>
    <scope>NUCLEOTIDE SEQUENCE [LARGE SCALE MRNA]</scope>
    <source>
        <strain>Hereford</strain>
        <tissue>Hippocampus</tissue>
    </source>
</reference>
<accession>Q0IIL1</accession>
<organism>
    <name type="scientific">Bos taurus</name>
    <name type="common">Bovine</name>
    <dbReference type="NCBI Taxonomy" id="9913"/>
    <lineage>
        <taxon>Eukaryota</taxon>
        <taxon>Metazoa</taxon>
        <taxon>Chordata</taxon>
        <taxon>Craniata</taxon>
        <taxon>Vertebrata</taxon>
        <taxon>Euteleostomi</taxon>
        <taxon>Mammalia</taxon>
        <taxon>Eutheria</taxon>
        <taxon>Laurasiatheria</taxon>
        <taxon>Artiodactyla</taxon>
        <taxon>Ruminantia</taxon>
        <taxon>Pecora</taxon>
        <taxon>Bovidae</taxon>
        <taxon>Bovinae</taxon>
        <taxon>Bos</taxon>
    </lineage>
</organism>
<sequence length="478" mass="54422">MFRLNSLSALAELAVGSRWYHGGSQPTQIRRRLMMVAFLGASAVTASTGLLWKRALAESPPSANNIKSELGDKGKSKEEGEDCNAEKKAAGVCLEPYPEEKKKKRSGFRDRKVMEYENRIRAYSTPDKIFRYFATLKVISEHGESEVFMTPQDFVRSITPNEKQPEHLGLDQYTIKRFDGKKIAQEREKFADEGSIFYTLGECGLISFSDYIFLTTVLSTPQRNFEIAFKMFDLNGDGEVDMEEFEQVQSIIRSQTSMGMRHRDRSTTGNTLKSGLCSALTTYFFGADLKGKLTIKNFLEFQRKLQHDVLKLEFERHDPVDGRITERQFGGMLLAYSGVQSKKLTAMQKQLKKHFKEGKGLTFQEVENFFTFLKNINDVDTALSFYHMAGASLDKVTMQQVARTVAKVELSDHVCDVVFALFDCDGNGELSNKEFVSIMKQRLMRGLEKPKDMGFTRLMQAMWKCAQETAWDFALPKQ</sequence>
<gene>
    <name type="primary">MICU1</name>
    <name type="synonym">CBARA1</name>
</gene>
<evidence type="ECO:0000250" key="1">
    <source>
        <dbReference type="UniProtKB" id="Q8VCX5"/>
    </source>
</evidence>
<evidence type="ECO:0000250" key="2">
    <source>
        <dbReference type="UniProtKB" id="Q9BPX6"/>
    </source>
</evidence>
<evidence type="ECO:0000255" key="3"/>
<evidence type="ECO:0000255" key="4">
    <source>
        <dbReference type="PROSITE-ProRule" id="PRU00448"/>
    </source>
</evidence>
<evidence type="ECO:0000256" key="5">
    <source>
        <dbReference type="SAM" id="MobiDB-lite"/>
    </source>
</evidence>
<evidence type="ECO:0000305" key="6"/>